<feature type="chain" id="PRO_1000011002" description="N-acetyl-gamma-glutamyl-phosphate reductase">
    <location>
        <begin position="1"/>
        <end position="342"/>
    </location>
</feature>
<feature type="active site" evidence="1">
    <location>
        <position position="149"/>
    </location>
</feature>
<evidence type="ECO:0000255" key="1">
    <source>
        <dbReference type="HAMAP-Rule" id="MF_00150"/>
    </source>
</evidence>
<name>ARGC_JANSC</name>
<keyword id="KW-0028">Amino-acid biosynthesis</keyword>
<keyword id="KW-0055">Arginine biosynthesis</keyword>
<keyword id="KW-0963">Cytoplasm</keyword>
<keyword id="KW-0521">NADP</keyword>
<keyword id="KW-0560">Oxidoreductase</keyword>
<keyword id="KW-1185">Reference proteome</keyword>
<gene>
    <name evidence="1" type="primary">argC</name>
    <name type="ordered locus">Jann_2336</name>
</gene>
<reference key="1">
    <citation type="submission" date="2006-02" db="EMBL/GenBank/DDBJ databases">
        <title>Complete sequence of chromosome of Jannaschia sp. CCS1.</title>
        <authorList>
            <consortium name="US DOE Joint Genome Institute"/>
            <person name="Copeland A."/>
            <person name="Lucas S."/>
            <person name="Lapidus A."/>
            <person name="Barry K."/>
            <person name="Detter J.C."/>
            <person name="Glavina del Rio T."/>
            <person name="Hammon N."/>
            <person name="Israni S."/>
            <person name="Pitluck S."/>
            <person name="Brettin T."/>
            <person name="Bruce D."/>
            <person name="Han C."/>
            <person name="Tapia R."/>
            <person name="Gilna P."/>
            <person name="Chertkov O."/>
            <person name="Saunders E."/>
            <person name="Schmutz J."/>
            <person name="Larimer F."/>
            <person name="Land M."/>
            <person name="Kyrpides N."/>
            <person name="Lykidis A."/>
            <person name="Moran M.A."/>
            <person name="Belas R."/>
            <person name="Ye W."/>
            <person name="Buchan A."/>
            <person name="Gonzalez J.M."/>
            <person name="Schell M.A."/>
            <person name="Richardson P."/>
        </authorList>
    </citation>
    <scope>NUCLEOTIDE SEQUENCE [LARGE SCALE GENOMIC DNA]</scope>
    <source>
        <strain>CCS1</strain>
    </source>
</reference>
<accession>Q28PV9</accession>
<comment type="function">
    <text evidence="1">Catalyzes the NADPH-dependent reduction of N-acetyl-5-glutamyl phosphate to yield N-acetyl-L-glutamate 5-semialdehyde.</text>
</comment>
<comment type="catalytic activity">
    <reaction evidence="1">
        <text>N-acetyl-L-glutamate 5-semialdehyde + phosphate + NADP(+) = N-acetyl-L-glutamyl 5-phosphate + NADPH + H(+)</text>
        <dbReference type="Rhea" id="RHEA:21588"/>
        <dbReference type="ChEBI" id="CHEBI:15378"/>
        <dbReference type="ChEBI" id="CHEBI:29123"/>
        <dbReference type="ChEBI" id="CHEBI:43474"/>
        <dbReference type="ChEBI" id="CHEBI:57783"/>
        <dbReference type="ChEBI" id="CHEBI:57936"/>
        <dbReference type="ChEBI" id="CHEBI:58349"/>
        <dbReference type="EC" id="1.2.1.38"/>
    </reaction>
</comment>
<comment type="pathway">
    <text evidence="1">Amino-acid biosynthesis; L-arginine biosynthesis; N(2)-acetyl-L-ornithine from L-glutamate: step 3/4.</text>
</comment>
<comment type="subcellular location">
    <subcellularLocation>
        <location evidence="1">Cytoplasm</location>
    </subcellularLocation>
</comment>
<comment type="similarity">
    <text evidence="1">Belongs to the NAGSA dehydrogenase family. Type 1 subfamily.</text>
</comment>
<sequence>MTKKIAILGASGYTGAELCRLIAGHPDMTIVALTGDRKAGQPMASVYPFLRGAGLPDLVRIEDVDFSGVDLAFCALPHATSQSVIKALPADLKVVDLSADFRLRDPADYAKWYGKDHDAPALQKQAIYGLTEFYRDQIRDARLVAGTGCNAATGQFALRPLIENGVVDLDDIIIDLICGVSGAGRALKENLLHAELSEGTHAYALGGTHRHLGEFDQEFSKVAGRKVEVQFTPHLAPFNRGILATCYVKGDAQAIHATLTAAYRGEMFIEVLPFGAAPSTHDVRGTNYCHIGVVADRRSGRAQIVAALDNLCKGSSGQAVQNANLMLGLEETAGLLGLGVFP</sequence>
<dbReference type="EC" id="1.2.1.38" evidence="1"/>
<dbReference type="EMBL" id="CP000264">
    <property type="protein sequence ID" value="ABD55253.1"/>
    <property type="molecule type" value="Genomic_DNA"/>
</dbReference>
<dbReference type="RefSeq" id="WP_011455457.1">
    <property type="nucleotide sequence ID" value="NC_007802.1"/>
</dbReference>
<dbReference type="SMR" id="Q28PV9"/>
<dbReference type="STRING" id="290400.Jann_2336"/>
<dbReference type="KEGG" id="jan:Jann_2336"/>
<dbReference type="eggNOG" id="COG0002">
    <property type="taxonomic scope" value="Bacteria"/>
</dbReference>
<dbReference type="HOGENOM" id="CLU_006384_0_1_5"/>
<dbReference type="OrthoDB" id="9801289at2"/>
<dbReference type="UniPathway" id="UPA00068">
    <property type="reaction ID" value="UER00108"/>
</dbReference>
<dbReference type="Proteomes" id="UP000008326">
    <property type="component" value="Chromosome"/>
</dbReference>
<dbReference type="GO" id="GO:0005737">
    <property type="term" value="C:cytoplasm"/>
    <property type="evidence" value="ECO:0007669"/>
    <property type="project" value="UniProtKB-SubCell"/>
</dbReference>
<dbReference type="GO" id="GO:0003942">
    <property type="term" value="F:N-acetyl-gamma-glutamyl-phosphate reductase activity"/>
    <property type="evidence" value="ECO:0007669"/>
    <property type="project" value="UniProtKB-UniRule"/>
</dbReference>
<dbReference type="GO" id="GO:0051287">
    <property type="term" value="F:NAD binding"/>
    <property type="evidence" value="ECO:0007669"/>
    <property type="project" value="InterPro"/>
</dbReference>
<dbReference type="GO" id="GO:0070401">
    <property type="term" value="F:NADP+ binding"/>
    <property type="evidence" value="ECO:0007669"/>
    <property type="project" value="InterPro"/>
</dbReference>
<dbReference type="GO" id="GO:0006526">
    <property type="term" value="P:L-arginine biosynthetic process"/>
    <property type="evidence" value="ECO:0007669"/>
    <property type="project" value="UniProtKB-UniRule"/>
</dbReference>
<dbReference type="CDD" id="cd23934">
    <property type="entry name" value="AGPR_1_C"/>
    <property type="match status" value="1"/>
</dbReference>
<dbReference type="CDD" id="cd17895">
    <property type="entry name" value="AGPR_1_N"/>
    <property type="match status" value="1"/>
</dbReference>
<dbReference type="Gene3D" id="3.30.360.10">
    <property type="entry name" value="Dihydrodipicolinate Reductase, domain 2"/>
    <property type="match status" value="1"/>
</dbReference>
<dbReference type="Gene3D" id="3.40.50.720">
    <property type="entry name" value="NAD(P)-binding Rossmann-like Domain"/>
    <property type="match status" value="1"/>
</dbReference>
<dbReference type="HAMAP" id="MF_00150">
    <property type="entry name" value="ArgC_type1"/>
    <property type="match status" value="1"/>
</dbReference>
<dbReference type="InterPro" id="IPR000706">
    <property type="entry name" value="AGPR_type-1"/>
</dbReference>
<dbReference type="InterPro" id="IPR036291">
    <property type="entry name" value="NAD(P)-bd_dom_sf"/>
</dbReference>
<dbReference type="InterPro" id="IPR050085">
    <property type="entry name" value="NAGSA_dehydrogenase"/>
</dbReference>
<dbReference type="InterPro" id="IPR000534">
    <property type="entry name" value="Semialdehyde_DH_NAD-bd"/>
</dbReference>
<dbReference type="NCBIfam" id="TIGR01850">
    <property type="entry name" value="argC"/>
    <property type="match status" value="1"/>
</dbReference>
<dbReference type="PANTHER" id="PTHR32338:SF10">
    <property type="entry name" value="N-ACETYL-GAMMA-GLUTAMYL-PHOSPHATE REDUCTASE, CHLOROPLASTIC-RELATED"/>
    <property type="match status" value="1"/>
</dbReference>
<dbReference type="PANTHER" id="PTHR32338">
    <property type="entry name" value="N-ACETYL-GAMMA-GLUTAMYL-PHOSPHATE REDUCTASE, CHLOROPLASTIC-RELATED-RELATED"/>
    <property type="match status" value="1"/>
</dbReference>
<dbReference type="Pfam" id="PF01118">
    <property type="entry name" value="Semialdhyde_dh"/>
    <property type="match status" value="1"/>
</dbReference>
<dbReference type="Pfam" id="PF22698">
    <property type="entry name" value="Semialdhyde_dhC_1"/>
    <property type="match status" value="1"/>
</dbReference>
<dbReference type="SMART" id="SM00859">
    <property type="entry name" value="Semialdhyde_dh"/>
    <property type="match status" value="1"/>
</dbReference>
<dbReference type="SUPFAM" id="SSF55347">
    <property type="entry name" value="Glyceraldehyde-3-phosphate dehydrogenase-like, C-terminal domain"/>
    <property type="match status" value="1"/>
</dbReference>
<dbReference type="SUPFAM" id="SSF51735">
    <property type="entry name" value="NAD(P)-binding Rossmann-fold domains"/>
    <property type="match status" value="1"/>
</dbReference>
<organism>
    <name type="scientific">Jannaschia sp. (strain CCS1)</name>
    <dbReference type="NCBI Taxonomy" id="290400"/>
    <lineage>
        <taxon>Bacteria</taxon>
        <taxon>Pseudomonadati</taxon>
        <taxon>Pseudomonadota</taxon>
        <taxon>Alphaproteobacteria</taxon>
        <taxon>Rhodobacterales</taxon>
        <taxon>Roseobacteraceae</taxon>
        <taxon>Jannaschia</taxon>
    </lineage>
</organism>
<protein>
    <recommendedName>
        <fullName evidence="1">N-acetyl-gamma-glutamyl-phosphate reductase</fullName>
        <shortName evidence="1">AGPR</shortName>
        <ecNumber evidence="1">1.2.1.38</ecNumber>
    </recommendedName>
    <alternativeName>
        <fullName evidence="1">N-acetyl-glutamate semialdehyde dehydrogenase</fullName>
        <shortName evidence="1">NAGSA dehydrogenase</shortName>
    </alternativeName>
</protein>
<proteinExistence type="inferred from homology"/>